<dbReference type="EC" id="1.2.1.41" evidence="1"/>
<dbReference type="EMBL" id="CP001151">
    <property type="protein sequence ID" value="ACM03010.1"/>
    <property type="molecule type" value="Genomic_DNA"/>
</dbReference>
<dbReference type="RefSeq" id="WP_012640803.1">
    <property type="nucleotide sequence ID" value="NC_011958.1"/>
</dbReference>
<dbReference type="SMR" id="B9KW06"/>
<dbReference type="GeneID" id="67448505"/>
<dbReference type="KEGG" id="rsk:RSKD131_3150"/>
<dbReference type="HOGENOM" id="CLU_030231_0_0_5"/>
<dbReference type="UniPathway" id="UPA00098">
    <property type="reaction ID" value="UER00360"/>
</dbReference>
<dbReference type="GO" id="GO:0005737">
    <property type="term" value="C:cytoplasm"/>
    <property type="evidence" value="ECO:0007669"/>
    <property type="project" value="UniProtKB-SubCell"/>
</dbReference>
<dbReference type="GO" id="GO:0004350">
    <property type="term" value="F:glutamate-5-semialdehyde dehydrogenase activity"/>
    <property type="evidence" value="ECO:0007669"/>
    <property type="project" value="UniProtKB-UniRule"/>
</dbReference>
<dbReference type="GO" id="GO:0050661">
    <property type="term" value="F:NADP binding"/>
    <property type="evidence" value="ECO:0007669"/>
    <property type="project" value="InterPro"/>
</dbReference>
<dbReference type="GO" id="GO:0055129">
    <property type="term" value="P:L-proline biosynthetic process"/>
    <property type="evidence" value="ECO:0007669"/>
    <property type="project" value="UniProtKB-UniRule"/>
</dbReference>
<dbReference type="CDD" id="cd07079">
    <property type="entry name" value="ALDH_F18-19_ProA-GPR"/>
    <property type="match status" value="1"/>
</dbReference>
<dbReference type="Gene3D" id="3.40.605.10">
    <property type="entry name" value="Aldehyde Dehydrogenase, Chain A, domain 1"/>
    <property type="match status" value="1"/>
</dbReference>
<dbReference type="Gene3D" id="3.40.309.10">
    <property type="entry name" value="Aldehyde Dehydrogenase, Chain A, domain 2"/>
    <property type="match status" value="1"/>
</dbReference>
<dbReference type="HAMAP" id="MF_00412">
    <property type="entry name" value="ProA"/>
    <property type="match status" value="1"/>
</dbReference>
<dbReference type="InterPro" id="IPR016161">
    <property type="entry name" value="Ald_DH/histidinol_DH"/>
</dbReference>
<dbReference type="InterPro" id="IPR016163">
    <property type="entry name" value="Ald_DH_C"/>
</dbReference>
<dbReference type="InterPro" id="IPR016162">
    <property type="entry name" value="Ald_DH_N"/>
</dbReference>
<dbReference type="InterPro" id="IPR015590">
    <property type="entry name" value="Aldehyde_DH_dom"/>
</dbReference>
<dbReference type="InterPro" id="IPR020593">
    <property type="entry name" value="G-glutamylP_reductase_CS"/>
</dbReference>
<dbReference type="InterPro" id="IPR012134">
    <property type="entry name" value="Glu-5-SA_DH"/>
</dbReference>
<dbReference type="InterPro" id="IPR000965">
    <property type="entry name" value="GPR_dom"/>
</dbReference>
<dbReference type="NCBIfam" id="NF001221">
    <property type="entry name" value="PRK00197.1"/>
    <property type="match status" value="1"/>
</dbReference>
<dbReference type="NCBIfam" id="TIGR00407">
    <property type="entry name" value="proA"/>
    <property type="match status" value="1"/>
</dbReference>
<dbReference type="PANTHER" id="PTHR11063:SF8">
    <property type="entry name" value="DELTA-1-PYRROLINE-5-CARBOXYLATE SYNTHASE"/>
    <property type="match status" value="1"/>
</dbReference>
<dbReference type="PANTHER" id="PTHR11063">
    <property type="entry name" value="GLUTAMATE SEMIALDEHYDE DEHYDROGENASE"/>
    <property type="match status" value="1"/>
</dbReference>
<dbReference type="Pfam" id="PF00171">
    <property type="entry name" value="Aldedh"/>
    <property type="match status" value="1"/>
</dbReference>
<dbReference type="PIRSF" id="PIRSF000151">
    <property type="entry name" value="GPR"/>
    <property type="match status" value="1"/>
</dbReference>
<dbReference type="SUPFAM" id="SSF53720">
    <property type="entry name" value="ALDH-like"/>
    <property type="match status" value="1"/>
</dbReference>
<dbReference type="PROSITE" id="PS01223">
    <property type="entry name" value="PROA"/>
    <property type="match status" value="1"/>
</dbReference>
<protein>
    <recommendedName>
        <fullName evidence="1">Gamma-glutamyl phosphate reductase</fullName>
        <shortName evidence="1">GPR</shortName>
        <ecNumber evidence="1">1.2.1.41</ecNumber>
    </recommendedName>
    <alternativeName>
        <fullName evidence="1">Glutamate-5-semialdehyde dehydrogenase</fullName>
    </alternativeName>
    <alternativeName>
        <fullName evidence="1">Glutamyl-gamma-semialdehyde dehydrogenase</fullName>
        <shortName evidence="1">GSA dehydrogenase</shortName>
    </alternativeName>
</protein>
<evidence type="ECO:0000255" key="1">
    <source>
        <dbReference type="HAMAP-Rule" id="MF_00412"/>
    </source>
</evidence>
<gene>
    <name evidence="1" type="primary">proA</name>
    <name type="ordered locus">RSKD131_3150</name>
</gene>
<proteinExistence type="inferred from homology"/>
<organism>
    <name type="scientific">Cereibacter sphaeroides (strain KD131 / KCTC 12085)</name>
    <name type="common">Rhodobacter sphaeroides</name>
    <dbReference type="NCBI Taxonomy" id="557760"/>
    <lineage>
        <taxon>Bacteria</taxon>
        <taxon>Pseudomonadati</taxon>
        <taxon>Pseudomonadota</taxon>
        <taxon>Alphaproteobacteria</taxon>
        <taxon>Rhodobacterales</taxon>
        <taxon>Paracoccaceae</taxon>
        <taxon>Cereibacter</taxon>
    </lineage>
</organism>
<sequence length="420" mass="44643">MDGTDVTMLMREIGIRARAAAAELAFAEPSRKEEALNAAAEAMLARSDEILEANGRDLAFGAEKGLTPAMMDRLKLDAARIDGIVEGLRAVAGQPDPVGQVIAEWDRPSGLHIRRVRTPLGVVGVIYESRPNVTADAGALCLKSGNAVILRGGSESFHSSGAIHAALQDGLRQAGLPVDAIQRVPTRDRAAVAEMLRMVEHIDVIVPRGGKGLVGLVQAEARVPVFAHLEGICHVYADGDADLEKARRVVLNAKTRRTGICGSAECLLIDRAFLAKHGPVLIEDLLKAGVEVRAEGELAEVPGTVPAQPEDFGREFLDMIIAAKVVGGVDEAIAHIRRYGSSHTESILTENDATAERFFRRLDSAILMRNASTQFADGGEFGMGAEIGIATGKMHARGPVGAEQLTSFKYLVTGDGTIRA</sequence>
<feature type="chain" id="PRO_1000193642" description="Gamma-glutamyl phosphate reductase">
    <location>
        <begin position="1"/>
        <end position="420"/>
    </location>
</feature>
<reference key="1">
    <citation type="journal article" date="2009" name="J. Bacteriol.">
        <title>Complete genome sequence of Rhodobacter sphaeroides KD131.</title>
        <authorList>
            <person name="Lim S.-K."/>
            <person name="Kim S.J."/>
            <person name="Cha S.H."/>
            <person name="Oh Y.-K."/>
            <person name="Rhee H.-J."/>
            <person name="Kim M.-S."/>
            <person name="Lee J.K."/>
        </authorList>
    </citation>
    <scope>NUCLEOTIDE SEQUENCE [LARGE SCALE GENOMIC DNA]</scope>
    <source>
        <strain>KD131 / KCTC 12085</strain>
    </source>
</reference>
<name>PROA_CERSK</name>
<accession>B9KW06</accession>
<keyword id="KW-0028">Amino-acid biosynthesis</keyword>
<keyword id="KW-0963">Cytoplasm</keyword>
<keyword id="KW-0521">NADP</keyword>
<keyword id="KW-0560">Oxidoreductase</keyword>
<keyword id="KW-0641">Proline biosynthesis</keyword>
<comment type="function">
    <text evidence="1">Catalyzes the NADPH-dependent reduction of L-glutamate 5-phosphate into L-glutamate 5-semialdehyde and phosphate. The product spontaneously undergoes cyclization to form 1-pyrroline-5-carboxylate.</text>
</comment>
<comment type="catalytic activity">
    <reaction evidence="1">
        <text>L-glutamate 5-semialdehyde + phosphate + NADP(+) = L-glutamyl 5-phosphate + NADPH + H(+)</text>
        <dbReference type="Rhea" id="RHEA:19541"/>
        <dbReference type="ChEBI" id="CHEBI:15378"/>
        <dbReference type="ChEBI" id="CHEBI:43474"/>
        <dbReference type="ChEBI" id="CHEBI:57783"/>
        <dbReference type="ChEBI" id="CHEBI:58066"/>
        <dbReference type="ChEBI" id="CHEBI:58274"/>
        <dbReference type="ChEBI" id="CHEBI:58349"/>
        <dbReference type="EC" id="1.2.1.41"/>
    </reaction>
</comment>
<comment type="pathway">
    <text evidence="1">Amino-acid biosynthesis; L-proline biosynthesis; L-glutamate 5-semialdehyde from L-glutamate: step 2/2.</text>
</comment>
<comment type="subcellular location">
    <subcellularLocation>
        <location evidence="1">Cytoplasm</location>
    </subcellularLocation>
</comment>
<comment type="similarity">
    <text evidence="1">Belongs to the gamma-glutamyl phosphate reductase family.</text>
</comment>